<protein>
    <recommendedName>
        <fullName>Uncharacterized protein YPL062W</fullName>
    </recommendedName>
</protein>
<accession>Q02781</accession>
<accession>A0A1S0T0C6</accession>
<dbReference type="EMBL" id="U39205">
    <property type="protein sequence ID" value="AAB68303.1"/>
    <property type="molecule type" value="Genomic_DNA"/>
</dbReference>
<dbReference type="EMBL" id="BK006949">
    <property type="protein sequence ID" value="DAA80343.1"/>
    <property type="molecule type" value="Genomic_DNA"/>
</dbReference>
<dbReference type="PIR" id="S60928">
    <property type="entry name" value="S60928"/>
</dbReference>
<dbReference type="RefSeq" id="NP_001335823.1">
    <property type="nucleotide sequence ID" value="NM_001348885.1"/>
</dbReference>
<dbReference type="FunCoup" id="Q02781">
    <property type="interactions" value="26"/>
</dbReference>
<dbReference type="STRING" id="4932.YPL062W"/>
<dbReference type="PaxDb" id="4932-YPL062W"/>
<dbReference type="EnsemblFungi" id="YPL062W_mRNA">
    <property type="protein sequence ID" value="YPL062W"/>
    <property type="gene ID" value="YPL062W"/>
</dbReference>
<dbReference type="GeneID" id="856043"/>
<dbReference type="AGR" id="SGD:S000005983"/>
<dbReference type="SGD" id="S000005983">
    <property type="gene designation" value="YPL062W"/>
</dbReference>
<dbReference type="HOGENOM" id="CLU_1897837_0_0_1"/>
<dbReference type="InParanoid" id="Q02781"/>
<dbReference type="OMA" id="CKKICIQ"/>
<dbReference type="PRO" id="PR:Q02781"/>
<dbReference type="Proteomes" id="UP000002311">
    <property type="component" value="Chromosome XVI"/>
</dbReference>
<dbReference type="RNAct" id="Q02781">
    <property type="molecule type" value="protein"/>
</dbReference>
<dbReference type="GO" id="GO:0032443">
    <property type="term" value="P:regulation of ergosterol biosynthetic process"/>
    <property type="evidence" value="ECO:0000315"/>
    <property type="project" value="SGD"/>
</dbReference>
<dbReference type="GO" id="GO:0051485">
    <property type="term" value="P:terpenoid biosynthetic process, mevalonate-dependent"/>
    <property type="evidence" value="ECO:0000315"/>
    <property type="project" value="SGD"/>
</dbReference>
<sequence length="134" mass="14903">MIELDYVKGEDTIVEATSTSPWLMRSPLARAAEKRGSGLFFDINEGHGQHRDVIVAYGVSKPKRRSPHPHGNKAADKRKTTEKEPERKKRVGAPRTCKKICIQLLYRFNFTVLGIGNVCNIDLLLGTVSATNAI</sequence>
<feature type="chain" id="PRO_0000299800" description="Uncharacterized protein YPL062W">
    <location>
        <begin position="1"/>
        <end position="134"/>
    </location>
</feature>
<feature type="region of interest" description="Disordered" evidence="1">
    <location>
        <begin position="59"/>
        <end position="92"/>
    </location>
</feature>
<feature type="compositionally biased region" description="Basic residues" evidence="1">
    <location>
        <begin position="61"/>
        <end position="71"/>
    </location>
</feature>
<feature type="compositionally biased region" description="Basic and acidic residues" evidence="1">
    <location>
        <begin position="73"/>
        <end position="87"/>
    </location>
</feature>
<gene>
    <name type="ordered locus">YPL062W</name>
    <name type="ORF">LPE8</name>
</gene>
<evidence type="ECO:0000256" key="1">
    <source>
        <dbReference type="SAM" id="MobiDB-lite"/>
    </source>
</evidence>
<proteinExistence type="predicted"/>
<organism>
    <name type="scientific">Saccharomyces cerevisiae (strain ATCC 204508 / S288c)</name>
    <name type="common">Baker's yeast</name>
    <dbReference type="NCBI Taxonomy" id="559292"/>
    <lineage>
        <taxon>Eukaryota</taxon>
        <taxon>Fungi</taxon>
        <taxon>Dikarya</taxon>
        <taxon>Ascomycota</taxon>
        <taxon>Saccharomycotina</taxon>
        <taxon>Saccharomycetes</taxon>
        <taxon>Saccharomycetales</taxon>
        <taxon>Saccharomycetaceae</taxon>
        <taxon>Saccharomyces</taxon>
    </lineage>
</organism>
<reference key="1">
    <citation type="journal article" date="1997" name="Nature">
        <title>The nucleotide sequence of Saccharomyces cerevisiae chromosome XVI.</title>
        <authorList>
            <person name="Bussey H."/>
            <person name="Storms R.K."/>
            <person name="Ahmed A."/>
            <person name="Albermann K."/>
            <person name="Allen E."/>
            <person name="Ansorge W."/>
            <person name="Araujo R."/>
            <person name="Aparicio A."/>
            <person name="Barrell B.G."/>
            <person name="Badcock K."/>
            <person name="Benes V."/>
            <person name="Botstein D."/>
            <person name="Bowman S."/>
            <person name="Brueckner M."/>
            <person name="Carpenter J."/>
            <person name="Cherry J.M."/>
            <person name="Chung E."/>
            <person name="Churcher C.M."/>
            <person name="Coster F."/>
            <person name="Davis K."/>
            <person name="Davis R.W."/>
            <person name="Dietrich F.S."/>
            <person name="Delius H."/>
            <person name="DiPaolo T."/>
            <person name="Dubois E."/>
            <person name="Duesterhoeft A."/>
            <person name="Duncan M."/>
            <person name="Floeth M."/>
            <person name="Fortin N."/>
            <person name="Friesen J.D."/>
            <person name="Fritz C."/>
            <person name="Goffeau A."/>
            <person name="Hall J."/>
            <person name="Hebling U."/>
            <person name="Heumann K."/>
            <person name="Hilbert H."/>
            <person name="Hillier L.W."/>
            <person name="Hunicke-Smith S."/>
            <person name="Hyman R.W."/>
            <person name="Johnston M."/>
            <person name="Kalman S."/>
            <person name="Kleine K."/>
            <person name="Komp C."/>
            <person name="Kurdi O."/>
            <person name="Lashkari D."/>
            <person name="Lew H."/>
            <person name="Lin A."/>
            <person name="Lin D."/>
            <person name="Louis E.J."/>
            <person name="Marathe R."/>
            <person name="Messenguy F."/>
            <person name="Mewes H.-W."/>
            <person name="Mirtipati S."/>
            <person name="Moestl D."/>
            <person name="Mueller-Auer S."/>
            <person name="Namath A."/>
            <person name="Nentwich U."/>
            <person name="Oefner P."/>
            <person name="Pearson D."/>
            <person name="Petel F.X."/>
            <person name="Pohl T.M."/>
            <person name="Purnelle B."/>
            <person name="Rajandream M.A."/>
            <person name="Rechmann S."/>
            <person name="Rieger M."/>
            <person name="Riles L."/>
            <person name="Roberts D."/>
            <person name="Schaefer M."/>
            <person name="Scharfe M."/>
            <person name="Scherens B."/>
            <person name="Schramm S."/>
            <person name="Schroeder M."/>
            <person name="Sdicu A.-M."/>
            <person name="Tettelin H."/>
            <person name="Urrestarazu L.A."/>
            <person name="Ushinsky S."/>
            <person name="Vierendeels F."/>
            <person name="Vissers S."/>
            <person name="Voss H."/>
            <person name="Walsh S.V."/>
            <person name="Wambutt R."/>
            <person name="Wang Y."/>
            <person name="Wedler E."/>
            <person name="Wedler H."/>
            <person name="Winnett E."/>
            <person name="Zhong W.-W."/>
            <person name="Zollner A."/>
            <person name="Vo D.H."/>
            <person name="Hani J."/>
        </authorList>
    </citation>
    <scope>NUCLEOTIDE SEQUENCE [LARGE SCALE GENOMIC DNA]</scope>
    <source>
        <strain>ATCC 204508 / S288c</strain>
    </source>
</reference>
<reference key="2">
    <citation type="journal article" date="2014" name="G3 (Bethesda)">
        <title>The reference genome sequence of Saccharomyces cerevisiae: Then and now.</title>
        <authorList>
            <person name="Engel S.R."/>
            <person name="Dietrich F.S."/>
            <person name="Fisk D.G."/>
            <person name="Binkley G."/>
            <person name="Balakrishnan R."/>
            <person name="Costanzo M.C."/>
            <person name="Dwight S.S."/>
            <person name="Hitz B.C."/>
            <person name="Karra K."/>
            <person name="Nash R.S."/>
            <person name="Weng S."/>
            <person name="Wong E.D."/>
            <person name="Lloyd P."/>
            <person name="Skrzypek M.S."/>
            <person name="Miyasato S.R."/>
            <person name="Simison M."/>
            <person name="Cherry J.M."/>
        </authorList>
    </citation>
    <scope>GENOME REANNOTATION</scope>
    <source>
        <strain>ATCC 204508 / S288c</strain>
    </source>
</reference>
<name>YP062_YEAST</name>
<keyword id="KW-1185">Reference proteome</keyword>